<feature type="chain" id="PRO_0000298682" description="Crotonobetaine/carnitine--CoA ligase">
    <location>
        <begin position="1"/>
        <end position="517"/>
    </location>
</feature>
<name>CAIC_SHIDS</name>
<gene>
    <name evidence="1" type="primary">caiC</name>
    <name type="ordered locus">SDY_0059</name>
</gene>
<reference key="1">
    <citation type="journal article" date="2005" name="Nucleic Acids Res.">
        <title>Genome dynamics and diversity of Shigella species, the etiologic agents of bacillary dysentery.</title>
        <authorList>
            <person name="Yang F."/>
            <person name="Yang J."/>
            <person name="Zhang X."/>
            <person name="Chen L."/>
            <person name="Jiang Y."/>
            <person name="Yan Y."/>
            <person name="Tang X."/>
            <person name="Wang J."/>
            <person name="Xiong Z."/>
            <person name="Dong J."/>
            <person name="Xue Y."/>
            <person name="Zhu Y."/>
            <person name="Xu X."/>
            <person name="Sun L."/>
            <person name="Chen S."/>
            <person name="Nie H."/>
            <person name="Peng J."/>
            <person name="Xu J."/>
            <person name="Wang Y."/>
            <person name="Yuan Z."/>
            <person name="Wen Y."/>
            <person name="Yao Z."/>
            <person name="Shen Y."/>
            <person name="Qiang B."/>
            <person name="Hou Y."/>
            <person name="Yu J."/>
            <person name="Jin Q."/>
        </authorList>
    </citation>
    <scope>NUCLEOTIDE SEQUENCE [LARGE SCALE GENOMIC DNA]</scope>
    <source>
        <strain>Sd197</strain>
    </source>
</reference>
<comment type="function">
    <text evidence="1">Catalyzes the transfer of CoA to carnitine, generating the initial carnitinyl-CoA needed for the CaiB reaction cycle. Also has activity toward crotonobetaine and gamma-butyrobetaine.</text>
</comment>
<comment type="catalytic activity">
    <reaction evidence="1">
        <text>4-(trimethylamino)butanoate + ATP + CoA = 4-(trimethylamino)butanoyl-CoA + AMP + diphosphate</text>
        <dbReference type="Rhea" id="RHEA:55960"/>
        <dbReference type="ChEBI" id="CHEBI:16244"/>
        <dbReference type="ChEBI" id="CHEBI:30616"/>
        <dbReference type="ChEBI" id="CHEBI:33019"/>
        <dbReference type="ChEBI" id="CHEBI:57287"/>
        <dbReference type="ChEBI" id="CHEBI:61513"/>
        <dbReference type="ChEBI" id="CHEBI:456215"/>
        <dbReference type="EC" id="6.2.1.48"/>
    </reaction>
</comment>
<comment type="catalytic activity">
    <reaction evidence="1">
        <text>crotonobetaine + ATP + CoA = crotonobetainyl-CoA + AMP + diphosphate</text>
        <dbReference type="Rhea" id="RHEA:30079"/>
        <dbReference type="ChEBI" id="CHEBI:17237"/>
        <dbReference type="ChEBI" id="CHEBI:30616"/>
        <dbReference type="ChEBI" id="CHEBI:33019"/>
        <dbReference type="ChEBI" id="CHEBI:57287"/>
        <dbReference type="ChEBI" id="CHEBI:60933"/>
        <dbReference type="ChEBI" id="CHEBI:456215"/>
        <dbReference type="EC" id="6.2.1.48"/>
    </reaction>
</comment>
<comment type="catalytic activity">
    <reaction evidence="1">
        <text>(R)-carnitine + ATP + CoA = (R)-carnitinyl-CoA + AMP + diphosphate</text>
        <dbReference type="Rhea" id="RHEA:28514"/>
        <dbReference type="ChEBI" id="CHEBI:16347"/>
        <dbReference type="ChEBI" id="CHEBI:30616"/>
        <dbReference type="ChEBI" id="CHEBI:33019"/>
        <dbReference type="ChEBI" id="CHEBI:57287"/>
        <dbReference type="ChEBI" id="CHEBI:60932"/>
        <dbReference type="ChEBI" id="CHEBI:456215"/>
        <dbReference type="EC" id="6.2.1.48"/>
    </reaction>
</comment>
<comment type="pathway">
    <text evidence="1">Amine and polyamine metabolism; carnitine metabolism.</text>
</comment>
<comment type="similarity">
    <text evidence="1">Belongs to the ATP-dependent AMP-binding enzyme family.</text>
</comment>
<comment type="sequence caution" evidence="2">
    <conflict type="erroneous initiation">
        <sequence resource="EMBL-CDS" id="ABB60297"/>
    </conflict>
</comment>
<dbReference type="EC" id="6.2.1.48" evidence="1"/>
<dbReference type="EMBL" id="CP000034">
    <property type="protein sequence ID" value="ABB60297.1"/>
    <property type="status" value="ALT_INIT"/>
    <property type="molecule type" value="Genomic_DNA"/>
</dbReference>
<dbReference type="RefSeq" id="WP_005020929.1">
    <property type="nucleotide sequence ID" value="NC_007606.1"/>
</dbReference>
<dbReference type="RefSeq" id="YP_401786.1">
    <property type="nucleotide sequence ID" value="NC_007606.1"/>
</dbReference>
<dbReference type="SMR" id="Q32K60"/>
<dbReference type="STRING" id="300267.SDY_0059"/>
<dbReference type="EnsemblBacteria" id="ABB60297">
    <property type="protein sequence ID" value="ABB60297"/>
    <property type="gene ID" value="SDY_0059"/>
</dbReference>
<dbReference type="KEGG" id="sdy:SDY_0059"/>
<dbReference type="PATRIC" id="fig|300267.13.peg.65"/>
<dbReference type="HOGENOM" id="CLU_000022_59_0_6"/>
<dbReference type="UniPathway" id="UPA00117"/>
<dbReference type="Proteomes" id="UP000002716">
    <property type="component" value="Chromosome"/>
</dbReference>
<dbReference type="GO" id="GO:0051108">
    <property type="term" value="F:carnitine-CoA ligase activity"/>
    <property type="evidence" value="ECO:0007669"/>
    <property type="project" value="InterPro"/>
</dbReference>
<dbReference type="GO" id="GO:0051109">
    <property type="term" value="F:crotonobetaine-CoA ligase activity"/>
    <property type="evidence" value="ECO:0007669"/>
    <property type="project" value="InterPro"/>
</dbReference>
<dbReference type="GO" id="GO:0031956">
    <property type="term" value="F:medium-chain fatty acid-CoA ligase activity"/>
    <property type="evidence" value="ECO:0007669"/>
    <property type="project" value="TreeGrafter"/>
</dbReference>
<dbReference type="GO" id="GO:0009437">
    <property type="term" value="P:carnitine metabolic process"/>
    <property type="evidence" value="ECO:0007669"/>
    <property type="project" value="UniProtKB-UniRule"/>
</dbReference>
<dbReference type="GO" id="GO:0006631">
    <property type="term" value="P:fatty acid metabolic process"/>
    <property type="evidence" value="ECO:0007669"/>
    <property type="project" value="TreeGrafter"/>
</dbReference>
<dbReference type="CDD" id="cd05934">
    <property type="entry name" value="FACL_DitJ_like"/>
    <property type="match status" value="1"/>
</dbReference>
<dbReference type="FunFam" id="3.30.300.30:FF:000011">
    <property type="entry name" value="Crotonobetaine/carnitine--CoA ligase"/>
    <property type="match status" value="1"/>
</dbReference>
<dbReference type="FunFam" id="3.40.50.12780:FF:000017">
    <property type="entry name" value="Crotonobetaine/carnitine--CoA ligase"/>
    <property type="match status" value="1"/>
</dbReference>
<dbReference type="Gene3D" id="3.30.300.30">
    <property type="match status" value="1"/>
</dbReference>
<dbReference type="Gene3D" id="3.40.50.12780">
    <property type="entry name" value="N-terminal domain of ligase-like"/>
    <property type="match status" value="1"/>
</dbReference>
<dbReference type="HAMAP" id="MF_01524">
    <property type="entry name" value="CaiC"/>
    <property type="match status" value="1"/>
</dbReference>
<dbReference type="InterPro" id="IPR025110">
    <property type="entry name" value="AMP-bd_C"/>
</dbReference>
<dbReference type="InterPro" id="IPR045851">
    <property type="entry name" value="AMP-bd_C_sf"/>
</dbReference>
<dbReference type="InterPro" id="IPR020845">
    <property type="entry name" value="AMP-binding_CS"/>
</dbReference>
<dbReference type="InterPro" id="IPR000873">
    <property type="entry name" value="AMP-dep_synth/lig_dom"/>
</dbReference>
<dbReference type="InterPro" id="IPR042099">
    <property type="entry name" value="ANL_N_sf"/>
</dbReference>
<dbReference type="InterPro" id="IPR023456">
    <property type="entry name" value="CaiC"/>
</dbReference>
<dbReference type="NCBIfam" id="NF005947">
    <property type="entry name" value="PRK08008.1"/>
    <property type="match status" value="1"/>
</dbReference>
<dbReference type="PANTHER" id="PTHR43201">
    <property type="entry name" value="ACYL-COA SYNTHETASE"/>
    <property type="match status" value="1"/>
</dbReference>
<dbReference type="PANTHER" id="PTHR43201:SF5">
    <property type="entry name" value="MEDIUM-CHAIN ACYL-COA LIGASE ACSF2, MITOCHONDRIAL"/>
    <property type="match status" value="1"/>
</dbReference>
<dbReference type="Pfam" id="PF00501">
    <property type="entry name" value="AMP-binding"/>
    <property type="match status" value="1"/>
</dbReference>
<dbReference type="Pfam" id="PF13193">
    <property type="entry name" value="AMP-binding_C"/>
    <property type="match status" value="1"/>
</dbReference>
<dbReference type="SUPFAM" id="SSF56801">
    <property type="entry name" value="Acetyl-CoA synthetase-like"/>
    <property type="match status" value="1"/>
</dbReference>
<dbReference type="PROSITE" id="PS00455">
    <property type="entry name" value="AMP_BINDING"/>
    <property type="match status" value="1"/>
</dbReference>
<sequence>MDIIGGQHLRQMWDDLADVYGHKTALICESSGGVVNRYSYLELNQEINRTANLFYTLGIRKGDKVALHLDNCPEFIFCWFGLAKIGAIMVPINARLLREESAWILQNSQACLLVTSAQFYPMYQQIQQEDATQLRHICLTDVALPADDGVSSFTQLKNQQPATLCYAPPLSTDDTAEILFTSGTTSRPKGVVITHYNLRFAGYYSAWQCALRDDEVYLTVMPAFHIDCQCTAAMAAFSAGATFVLVEKYSARAFWGQVQKYRATITECIPMIIRTLMVQPPSANDRQHRLREVMFYLNLSEQEKDAFCERFGVRLLTSYGMTETIVGIIGDRLGDKRRWPSIGRAGFCYEAEIRDDHNRPLPAGEIGEICIKGVLGKTIFKEYFLNPKATAKVLEADGWLHTGDTGYRDEEGFFYFVDRRCNMIKRGGENVSCVELENIIATHPKIQDIVVVGIKDSIRDEAIKAFVVLNEGETLSEEEFFRFCEQNMAKFKVPSYLEIRKVLPRNCSGKIIRKNLK</sequence>
<proteinExistence type="inferred from homology"/>
<accession>Q32K60</accession>
<keyword id="KW-0436">Ligase</keyword>
<keyword id="KW-1185">Reference proteome</keyword>
<organism>
    <name type="scientific">Shigella dysenteriae serotype 1 (strain Sd197)</name>
    <dbReference type="NCBI Taxonomy" id="300267"/>
    <lineage>
        <taxon>Bacteria</taxon>
        <taxon>Pseudomonadati</taxon>
        <taxon>Pseudomonadota</taxon>
        <taxon>Gammaproteobacteria</taxon>
        <taxon>Enterobacterales</taxon>
        <taxon>Enterobacteriaceae</taxon>
        <taxon>Shigella</taxon>
    </lineage>
</organism>
<evidence type="ECO:0000255" key="1">
    <source>
        <dbReference type="HAMAP-Rule" id="MF_01524"/>
    </source>
</evidence>
<evidence type="ECO:0000305" key="2"/>
<protein>
    <recommendedName>
        <fullName evidence="1">Crotonobetaine/carnitine--CoA ligase</fullName>
        <ecNumber evidence="1">6.2.1.48</ecNumber>
    </recommendedName>
</protein>